<feature type="chain" id="PRO_1000141428" description="Large ribosomal subunit protein uL1">
    <location>
        <begin position="1"/>
        <end position="232"/>
    </location>
</feature>
<keyword id="KW-0678">Repressor</keyword>
<keyword id="KW-0687">Ribonucleoprotein</keyword>
<keyword id="KW-0689">Ribosomal protein</keyword>
<keyword id="KW-0694">RNA-binding</keyword>
<keyword id="KW-0699">rRNA-binding</keyword>
<keyword id="KW-0810">Translation regulation</keyword>
<keyword id="KW-0820">tRNA-binding</keyword>
<dbReference type="EMBL" id="CP001029">
    <property type="protein sequence ID" value="ACB82579.1"/>
    <property type="molecule type" value="Genomic_DNA"/>
</dbReference>
<dbReference type="RefSeq" id="WP_012456183.1">
    <property type="nucleotide sequence ID" value="NC_010725.1"/>
</dbReference>
<dbReference type="SMR" id="B1ZFX0"/>
<dbReference type="STRING" id="441620.Mpop_4480"/>
<dbReference type="KEGG" id="mpo:Mpop_4480"/>
<dbReference type="eggNOG" id="COG0081">
    <property type="taxonomic scope" value="Bacteria"/>
</dbReference>
<dbReference type="HOGENOM" id="CLU_062853_0_0_5"/>
<dbReference type="OrthoDB" id="9803740at2"/>
<dbReference type="Proteomes" id="UP000007136">
    <property type="component" value="Chromosome"/>
</dbReference>
<dbReference type="GO" id="GO:0022625">
    <property type="term" value="C:cytosolic large ribosomal subunit"/>
    <property type="evidence" value="ECO:0007669"/>
    <property type="project" value="TreeGrafter"/>
</dbReference>
<dbReference type="GO" id="GO:0019843">
    <property type="term" value="F:rRNA binding"/>
    <property type="evidence" value="ECO:0007669"/>
    <property type="project" value="UniProtKB-UniRule"/>
</dbReference>
<dbReference type="GO" id="GO:0003735">
    <property type="term" value="F:structural constituent of ribosome"/>
    <property type="evidence" value="ECO:0007669"/>
    <property type="project" value="InterPro"/>
</dbReference>
<dbReference type="GO" id="GO:0000049">
    <property type="term" value="F:tRNA binding"/>
    <property type="evidence" value="ECO:0007669"/>
    <property type="project" value="UniProtKB-KW"/>
</dbReference>
<dbReference type="GO" id="GO:0006417">
    <property type="term" value="P:regulation of translation"/>
    <property type="evidence" value="ECO:0007669"/>
    <property type="project" value="UniProtKB-KW"/>
</dbReference>
<dbReference type="GO" id="GO:0006412">
    <property type="term" value="P:translation"/>
    <property type="evidence" value="ECO:0007669"/>
    <property type="project" value="UniProtKB-UniRule"/>
</dbReference>
<dbReference type="CDD" id="cd00403">
    <property type="entry name" value="Ribosomal_L1"/>
    <property type="match status" value="1"/>
</dbReference>
<dbReference type="FunFam" id="3.40.50.790:FF:000001">
    <property type="entry name" value="50S ribosomal protein L1"/>
    <property type="match status" value="1"/>
</dbReference>
<dbReference type="Gene3D" id="3.30.190.20">
    <property type="match status" value="1"/>
</dbReference>
<dbReference type="Gene3D" id="3.40.50.790">
    <property type="match status" value="1"/>
</dbReference>
<dbReference type="HAMAP" id="MF_01318_B">
    <property type="entry name" value="Ribosomal_uL1_B"/>
    <property type="match status" value="1"/>
</dbReference>
<dbReference type="InterPro" id="IPR005878">
    <property type="entry name" value="Ribosom_uL1_bac-type"/>
</dbReference>
<dbReference type="InterPro" id="IPR002143">
    <property type="entry name" value="Ribosomal_uL1"/>
</dbReference>
<dbReference type="InterPro" id="IPR023674">
    <property type="entry name" value="Ribosomal_uL1-like"/>
</dbReference>
<dbReference type="InterPro" id="IPR028364">
    <property type="entry name" value="Ribosomal_uL1/biogenesis"/>
</dbReference>
<dbReference type="InterPro" id="IPR016095">
    <property type="entry name" value="Ribosomal_uL1_3-a/b-sand"/>
</dbReference>
<dbReference type="InterPro" id="IPR023673">
    <property type="entry name" value="Ribosomal_uL1_CS"/>
</dbReference>
<dbReference type="NCBIfam" id="TIGR01169">
    <property type="entry name" value="rplA_bact"/>
    <property type="match status" value="1"/>
</dbReference>
<dbReference type="PANTHER" id="PTHR36427">
    <property type="entry name" value="54S RIBOSOMAL PROTEIN L1, MITOCHONDRIAL"/>
    <property type="match status" value="1"/>
</dbReference>
<dbReference type="PANTHER" id="PTHR36427:SF3">
    <property type="entry name" value="LARGE RIBOSOMAL SUBUNIT PROTEIN UL1M"/>
    <property type="match status" value="1"/>
</dbReference>
<dbReference type="Pfam" id="PF00687">
    <property type="entry name" value="Ribosomal_L1"/>
    <property type="match status" value="1"/>
</dbReference>
<dbReference type="PIRSF" id="PIRSF002155">
    <property type="entry name" value="Ribosomal_L1"/>
    <property type="match status" value="1"/>
</dbReference>
<dbReference type="SUPFAM" id="SSF56808">
    <property type="entry name" value="Ribosomal protein L1"/>
    <property type="match status" value="1"/>
</dbReference>
<dbReference type="PROSITE" id="PS01199">
    <property type="entry name" value="RIBOSOMAL_L1"/>
    <property type="match status" value="1"/>
</dbReference>
<accession>B1ZFX0</accession>
<name>RL1_METPB</name>
<organism>
    <name type="scientific">Methylorubrum populi (strain ATCC BAA-705 / NCIMB 13946 / BJ001)</name>
    <name type="common">Methylobacterium populi</name>
    <dbReference type="NCBI Taxonomy" id="441620"/>
    <lineage>
        <taxon>Bacteria</taxon>
        <taxon>Pseudomonadati</taxon>
        <taxon>Pseudomonadota</taxon>
        <taxon>Alphaproteobacteria</taxon>
        <taxon>Hyphomicrobiales</taxon>
        <taxon>Methylobacteriaceae</taxon>
        <taxon>Methylorubrum</taxon>
    </lineage>
</organism>
<gene>
    <name evidence="1" type="primary">rplA</name>
    <name type="ordered locus">Mpop_4480</name>
</gene>
<sequence>MAREGKRIRAAREGLEPTKLYAIDEAIKLVKSKASAKFDETVEISMNLGVDPRHADQMVRGVCNLPNGSGRTVRVAVFARGAKADDAKAAGADIVGAEDLLEIVQGGKIEFDRCIATPDLMPLVGRLGKVLGPRGLMPNPKVGTVTMDVKGAVAAAKGGAVEFRVEKAGIIHAGVGKVSFDEQKLVENIKAFADAVAKAKPAGAKGTYIQRIAVTSTMGPGVKVEPSTVLTA</sequence>
<protein>
    <recommendedName>
        <fullName evidence="1">Large ribosomal subunit protein uL1</fullName>
    </recommendedName>
    <alternativeName>
        <fullName evidence="2">50S ribosomal protein L1</fullName>
    </alternativeName>
</protein>
<evidence type="ECO:0000255" key="1">
    <source>
        <dbReference type="HAMAP-Rule" id="MF_01318"/>
    </source>
</evidence>
<evidence type="ECO:0000305" key="2"/>
<proteinExistence type="inferred from homology"/>
<comment type="function">
    <text evidence="1">Binds directly to 23S rRNA. The L1 stalk is quite mobile in the ribosome, and is involved in E site tRNA release.</text>
</comment>
<comment type="function">
    <text evidence="1">Protein L1 is also a translational repressor protein, it controls the translation of the L11 operon by binding to its mRNA.</text>
</comment>
<comment type="subunit">
    <text evidence="1">Part of the 50S ribosomal subunit.</text>
</comment>
<comment type="similarity">
    <text evidence="1">Belongs to the universal ribosomal protein uL1 family.</text>
</comment>
<reference key="1">
    <citation type="submission" date="2008-04" db="EMBL/GenBank/DDBJ databases">
        <title>Complete sequence of chromosome of Methylobacterium populi BJ001.</title>
        <authorList>
            <consortium name="US DOE Joint Genome Institute"/>
            <person name="Copeland A."/>
            <person name="Lucas S."/>
            <person name="Lapidus A."/>
            <person name="Glavina del Rio T."/>
            <person name="Dalin E."/>
            <person name="Tice H."/>
            <person name="Bruce D."/>
            <person name="Goodwin L."/>
            <person name="Pitluck S."/>
            <person name="Chertkov O."/>
            <person name="Brettin T."/>
            <person name="Detter J.C."/>
            <person name="Han C."/>
            <person name="Kuske C.R."/>
            <person name="Schmutz J."/>
            <person name="Larimer F."/>
            <person name="Land M."/>
            <person name="Hauser L."/>
            <person name="Kyrpides N."/>
            <person name="Mikhailova N."/>
            <person name="Marx C."/>
            <person name="Richardson P."/>
        </authorList>
    </citation>
    <scope>NUCLEOTIDE SEQUENCE [LARGE SCALE GENOMIC DNA]</scope>
    <source>
        <strain>ATCC BAA-705 / NCIMB 13946 / BJ001</strain>
    </source>
</reference>